<name>RR15_PHAVU</name>
<geneLocation type="chloroplast"/>
<feature type="chain" id="PRO_0000354275" description="Small ribosomal subunit protein uS15c">
    <location>
        <begin position="1"/>
        <end position="90"/>
    </location>
</feature>
<protein>
    <recommendedName>
        <fullName evidence="2">Small ribosomal subunit protein uS15c</fullName>
    </recommendedName>
    <alternativeName>
        <fullName>30S ribosomal protein S15, chloroplastic</fullName>
    </alternativeName>
</protein>
<proteinExistence type="inferred from homology"/>
<gene>
    <name type="primary">rps15</name>
</gene>
<accession>A4GGF3</accession>
<reference key="1">
    <citation type="journal article" date="2007" name="BMC Genomics">
        <title>Rapid evolutionary change of common bean (Phaseolus vulgaris L) plastome, and the genomic diversification of legume chloroplasts.</title>
        <authorList>
            <person name="Guo X."/>
            <person name="Castillo-Ramirez S."/>
            <person name="Gonzalez V."/>
            <person name="Bustos P."/>
            <person name="Fernandez-Vazquez J.L."/>
            <person name="Santamaria R.I."/>
            <person name="Arellano J."/>
            <person name="Cevallos M.A."/>
            <person name="Davila G."/>
        </authorList>
    </citation>
    <scope>NUCLEOTIDE SEQUENCE [LARGE SCALE GENOMIC DNA]</scope>
    <source>
        <strain>cv. Negro Jamapa</strain>
    </source>
</reference>
<reference key="2">
    <citation type="submission" date="2007-10" db="EMBL/GenBank/DDBJ databases">
        <title>Complete nucleotide sequence of the plastid genome of the common bean, Phaseolus vulgaris.</title>
        <authorList>
            <person name="Moore M.J."/>
            <person name="Triplett E.W."/>
            <person name="Broughton W.J."/>
            <person name="Soltis P.S."/>
            <person name="Soltis D.E."/>
        </authorList>
    </citation>
    <scope>NUCLEOTIDE SEQUENCE [LARGE SCALE GENOMIC DNA]</scope>
</reference>
<evidence type="ECO:0000250" key="1"/>
<evidence type="ECO:0000305" key="2"/>
<keyword id="KW-0150">Chloroplast</keyword>
<keyword id="KW-0934">Plastid</keyword>
<keyword id="KW-0687">Ribonucleoprotein</keyword>
<keyword id="KW-0689">Ribosomal protein</keyword>
<comment type="subunit">
    <text evidence="1">Part of the 30S ribosomal subunit.</text>
</comment>
<comment type="subcellular location">
    <subcellularLocation>
        <location>Plastid</location>
        <location>Chloroplast</location>
    </subcellularLocation>
</comment>
<comment type="similarity">
    <text evidence="2">Belongs to the universal ribosomal protein uS15 family.</text>
</comment>
<dbReference type="EMBL" id="DQ886273">
    <property type="protein sequence ID" value="ABH88135.1"/>
    <property type="molecule type" value="Genomic_DNA"/>
</dbReference>
<dbReference type="EMBL" id="EU196765">
    <property type="protein sequence ID" value="ABW22811.1"/>
    <property type="molecule type" value="Genomic_DNA"/>
</dbReference>
<dbReference type="RefSeq" id="YP_001122854.1">
    <property type="nucleotide sequence ID" value="NC_009259.1"/>
</dbReference>
<dbReference type="SMR" id="A4GGF3"/>
<dbReference type="GeneID" id="4961792"/>
<dbReference type="KEGG" id="pvu:4961792"/>
<dbReference type="GO" id="GO:0009507">
    <property type="term" value="C:chloroplast"/>
    <property type="evidence" value="ECO:0007669"/>
    <property type="project" value="UniProtKB-SubCell"/>
</dbReference>
<dbReference type="GO" id="GO:1990904">
    <property type="term" value="C:ribonucleoprotein complex"/>
    <property type="evidence" value="ECO:0007669"/>
    <property type="project" value="UniProtKB-KW"/>
</dbReference>
<dbReference type="GO" id="GO:0005840">
    <property type="term" value="C:ribosome"/>
    <property type="evidence" value="ECO:0007669"/>
    <property type="project" value="UniProtKB-KW"/>
</dbReference>
<dbReference type="GO" id="GO:0003735">
    <property type="term" value="F:structural constituent of ribosome"/>
    <property type="evidence" value="ECO:0007669"/>
    <property type="project" value="InterPro"/>
</dbReference>
<dbReference type="GO" id="GO:0006412">
    <property type="term" value="P:translation"/>
    <property type="evidence" value="ECO:0007669"/>
    <property type="project" value="UniProtKB-UniRule"/>
</dbReference>
<dbReference type="CDD" id="cd00677">
    <property type="entry name" value="S15_NS1_EPRS_RNA-bind"/>
    <property type="match status" value="1"/>
</dbReference>
<dbReference type="Gene3D" id="1.10.287.10">
    <property type="entry name" value="S15/NS1, RNA-binding"/>
    <property type="match status" value="1"/>
</dbReference>
<dbReference type="HAMAP" id="MF_01343_B">
    <property type="entry name" value="Ribosomal_uS15_B"/>
    <property type="match status" value="1"/>
</dbReference>
<dbReference type="InterPro" id="IPR000589">
    <property type="entry name" value="Ribosomal_uS15"/>
</dbReference>
<dbReference type="InterPro" id="IPR005290">
    <property type="entry name" value="Ribosomal_uS15_bac-type"/>
</dbReference>
<dbReference type="InterPro" id="IPR009068">
    <property type="entry name" value="uS15_NS1_RNA-bd_sf"/>
</dbReference>
<dbReference type="NCBIfam" id="TIGR00952">
    <property type="entry name" value="S15_bact"/>
    <property type="match status" value="1"/>
</dbReference>
<dbReference type="PANTHER" id="PTHR23321">
    <property type="entry name" value="RIBOSOMAL PROTEIN S15, BACTERIAL AND ORGANELLAR"/>
    <property type="match status" value="1"/>
</dbReference>
<dbReference type="PANTHER" id="PTHR23321:SF26">
    <property type="entry name" value="SMALL RIBOSOMAL SUBUNIT PROTEIN US15M"/>
    <property type="match status" value="1"/>
</dbReference>
<dbReference type="Pfam" id="PF00312">
    <property type="entry name" value="Ribosomal_S15"/>
    <property type="match status" value="1"/>
</dbReference>
<dbReference type="SMART" id="SM01387">
    <property type="entry name" value="Ribosomal_S15"/>
    <property type="match status" value="1"/>
</dbReference>
<dbReference type="SUPFAM" id="SSF47060">
    <property type="entry name" value="S15/NS1 RNA-binding domain"/>
    <property type="match status" value="1"/>
</dbReference>
<dbReference type="PROSITE" id="PS00362">
    <property type="entry name" value="RIBOSOMAL_S15"/>
    <property type="match status" value="1"/>
</dbReference>
<sequence length="90" mass="10709">MVKNSFIPVLSQEKKGKNPGLVEFQIFQFTNRIRRLTSHFELHPKDYSSQTGLRKILGKRQRLLSYLSKKDGIQYKKLINQFDIRQSQIR</sequence>
<organism>
    <name type="scientific">Phaseolus vulgaris</name>
    <name type="common">Kidney bean</name>
    <name type="synonym">French bean</name>
    <dbReference type="NCBI Taxonomy" id="3885"/>
    <lineage>
        <taxon>Eukaryota</taxon>
        <taxon>Viridiplantae</taxon>
        <taxon>Streptophyta</taxon>
        <taxon>Embryophyta</taxon>
        <taxon>Tracheophyta</taxon>
        <taxon>Spermatophyta</taxon>
        <taxon>Magnoliopsida</taxon>
        <taxon>eudicotyledons</taxon>
        <taxon>Gunneridae</taxon>
        <taxon>Pentapetalae</taxon>
        <taxon>rosids</taxon>
        <taxon>fabids</taxon>
        <taxon>Fabales</taxon>
        <taxon>Fabaceae</taxon>
        <taxon>Papilionoideae</taxon>
        <taxon>50 kb inversion clade</taxon>
        <taxon>NPAAA clade</taxon>
        <taxon>indigoferoid/millettioid clade</taxon>
        <taxon>Phaseoleae</taxon>
        <taxon>Phaseolus</taxon>
    </lineage>
</organism>